<accession>Q9LTM0</accession>
<accession>Q6AWT7</accession>
<evidence type="ECO:0000250" key="1"/>
<evidence type="ECO:0000255" key="2"/>
<evidence type="ECO:0000305" key="3"/>
<gene>
    <name type="primary">CYP71B23</name>
    <name type="ordered locus">At3g26210</name>
    <name type="ORF">MTC11.12</name>
</gene>
<dbReference type="EC" id="1.14.-.-"/>
<dbReference type="EMBL" id="AB024038">
    <property type="protein sequence ID" value="BAB02442.1"/>
    <property type="molecule type" value="Genomic_DNA"/>
</dbReference>
<dbReference type="EMBL" id="CP002686">
    <property type="protein sequence ID" value="AEE77134.1"/>
    <property type="molecule type" value="Genomic_DNA"/>
</dbReference>
<dbReference type="EMBL" id="BT015161">
    <property type="protein sequence ID" value="AAT85757.1"/>
    <property type="molecule type" value="mRNA"/>
</dbReference>
<dbReference type="RefSeq" id="NP_189252.1">
    <property type="nucleotide sequence ID" value="NM_113528.4"/>
</dbReference>
<dbReference type="SMR" id="Q9LTM0"/>
<dbReference type="FunCoup" id="Q9LTM0">
    <property type="interactions" value="481"/>
</dbReference>
<dbReference type="IntAct" id="Q9LTM0">
    <property type="interactions" value="1"/>
</dbReference>
<dbReference type="STRING" id="3702.Q9LTM0"/>
<dbReference type="PaxDb" id="3702-AT3G26210.1"/>
<dbReference type="ProteomicsDB" id="239169"/>
<dbReference type="EnsemblPlants" id="AT3G26210.1">
    <property type="protein sequence ID" value="AT3G26210.1"/>
    <property type="gene ID" value="AT3G26210"/>
</dbReference>
<dbReference type="GeneID" id="822222"/>
<dbReference type="Gramene" id="AT3G26210.1">
    <property type="protein sequence ID" value="AT3G26210.1"/>
    <property type="gene ID" value="AT3G26210"/>
</dbReference>
<dbReference type="KEGG" id="ath:AT3G26210"/>
<dbReference type="Araport" id="AT3G26210"/>
<dbReference type="TAIR" id="AT3G26210">
    <property type="gene designation" value="CYP71B23"/>
</dbReference>
<dbReference type="eggNOG" id="KOG0156">
    <property type="taxonomic scope" value="Eukaryota"/>
</dbReference>
<dbReference type="HOGENOM" id="CLU_001570_4_1_1"/>
<dbReference type="InParanoid" id="Q9LTM0"/>
<dbReference type="OMA" id="KFNSFRY"/>
<dbReference type="OrthoDB" id="2789670at2759"/>
<dbReference type="PhylomeDB" id="Q9LTM0"/>
<dbReference type="BioCyc" id="ARA:AT3G26210-MONOMER"/>
<dbReference type="PRO" id="PR:Q9LTM0"/>
<dbReference type="Proteomes" id="UP000006548">
    <property type="component" value="Chromosome 3"/>
</dbReference>
<dbReference type="ExpressionAtlas" id="Q9LTM0">
    <property type="expression patterns" value="baseline and differential"/>
</dbReference>
<dbReference type="GO" id="GO:0005829">
    <property type="term" value="C:cytosol"/>
    <property type="evidence" value="ECO:0007005"/>
    <property type="project" value="TAIR"/>
</dbReference>
<dbReference type="GO" id="GO:0016020">
    <property type="term" value="C:membrane"/>
    <property type="evidence" value="ECO:0007669"/>
    <property type="project" value="UniProtKB-SubCell"/>
</dbReference>
<dbReference type="GO" id="GO:0020037">
    <property type="term" value="F:heme binding"/>
    <property type="evidence" value="ECO:0007669"/>
    <property type="project" value="InterPro"/>
</dbReference>
<dbReference type="GO" id="GO:0005506">
    <property type="term" value="F:iron ion binding"/>
    <property type="evidence" value="ECO:0007669"/>
    <property type="project" value="InterPro"/>
</dbReference>
<dbReference type="GO" id="GO:0004497">
    <property type="term" value="F:monooxygenase activity"/>
    <property type="evidence" value="ECO:0007669"/>
    <property type="project" value="UniProtKB-KW"/>
</dbReference>
<dbReference type="GO" id="GO:0016705">
    <property type="term" value="F:oxidoreductase activity, acting on paired donors, with incorporation or reduction of molecular oxygen"/>
    <property type="evidence" value="ECO:0007669"/>
    <property type="project" value="InterPro"/>
</dbReference>
<dbReference type="CDD" id="cd11072">
    <property type="entry name" value="CYP71-like"/>
    <property type="match status" value="1"/>
</dbReference>
<dbReference type="FunFam" id="1.10.630.10:FF:000011">
    <property type="entry name" value="Cytochrome P450 83B1"/>
    <property type="match status" value="1"/>
</dbReference>
<dbReference type="Gene3D" id="1.10.630.10">
    <property type="entry name" value="Cytochrome P450"/>
    <property type="match status" value="1"/>
</dbReference>
<dbReference type="InterPro" id="IPR001128">
    <property type="entry name" value="Cyt_P450"/>
</dbReference>
<dbReference type="InterPro" id="IPR017972">
    <property type="entry name" value="Cyt_P450_CS"/>
</dbReference>
<dbReference type="InterPro" id="IPR002401">
    <property type="entry name" value="Cyt_P450_E_grp-I"/>
</dbReference>
<dbReference type="InterPro" id="IPR036396">
    <property type="entry name" value="Cyt_P450_sf"/>
</dbReference>
<dbReference type="PANTHER" id="PTHR47955:SF19">
    <property type="entry name" value="CYTOCHROME P450 71A9-LIKE ISOFORM X1"/>
    <property type="match status" value="1"/>
</dbReference>
<dbReference type="PANTHER" id="PTHR47955">
    <property type="entry name" value="CYTOCHROME P450 FAMILY 71 PROTEIN"/>
    <property type="match status" value="1"/>
</dbReference>
<dbReference type="Pfam" id="PF00067">
    <property type="entry name" value="p450"/>
    <property type="match status" value="1"/>
</dbReference>
<dbReference type="PRINTS" id="PR00463">
    <property type="entry name" value="EP450I"/>
</dbReference>
<dbReference type="PRINTS" id="PR00385">
    <property type="entry name" value="P450"/>
</dbReference>
<dbReference type="SUPFAM" id="SSF48264">
    <property type="entry name" value="Cytochrome P450"/>
    <property type="match status" value="1"/>
</dbReference>
<dbReference type="PROSITE" id="PS00086">
    <property type="entry name" value="CYTOCHROME_P450"/>
    <property type="match status" value="1"/>
</dbReference>
<name>C71BN_ARATH</name>
<sequence length="501" mass="56923">MSIFLCFLLLLLLLLVTIIFTRKSQSSKLKLPPGPPKLPIIGNLHYLNGLPHKCLLNLWKIHGPVMQLQLGYVPLVVISSNQAAEEVLKTHDLDCCSRPETIASKTISYNFKDIGFAPYGEEWRALRKLAVIELFSLKKFNSFRYIREEENDLLVKKLSEASEKQSPVNLKKALFTLSASIVCRLAFGQNLHESEFIDEDSMEDLASRSEKIQAKFAFSNFFPGGWILDKITGQSKSLNEIFADLDGFFNQVLDDHLKPGRKVLETPDVVDVMIDMMNKQSQDGSFKLTTDHIKGIISDIFLAGVNTSATTILWAMTELIRNPRVMKKVQDEVRTVLGEKRDRITEQDLNQLNYFKLVIKETFRLHPAAPLLLPREAMAKIKIQGYDIPEKTQIMVNVYAIGRDPDLWENPEEFKPERFVDSSVDYRGLNFELLPFGSGRRICPGMTMGIATVELGLLNLLYFFDWGLPEGRTVKDIDLEEEGAIIIGKKVSLELVPTRRQ</sequence>
<protein>
    <recommendedName>
        <fullName>Cytochrome P450 71B23</fullName>
        <ecNumber>1.14.-.-</ecNumber>
    </recommendedName>
</protein>
<comment type="cofactor">
    <cofactor evidence="1">
        <name>heme</name>
        <dbReference type="ChEBI" id="CHEBI:30413"/>
    </cofactor>
</comment>
<comment type="subcellular location">
    <subcellularLocation>
        <location evidence="3">Membrane</location>
        <topology evidence="3">Single-pass membrane protein</topology>
    </subcellularLocation>
</comment>
<comment type="similarity">
    <text evidence="3">Belongs to the cytochrome P450 family.</text>
</comment>
<feature type="chain" id="PRO_0000052100" description="Cytochrome P450 71B23">
    <location>
        <begin position="1"/>
        <end position="501"/>
    </location>
</feature>
<feature type="transmembrane region" description="Helical" evidence="2">
    <location>
        <begin position="1"/>
        <end position="21"/>
    </location>
</feature>
<feature type="binding site" description="axial binding residue" evidence="1">
    <location>
        <position position="443"/>
    </location>
    <ligand>
        <name>heme</name>
        <dbReference type="ChEBI" id="CHEBI:30413"/>
    </ligand>
    <ligandPart>
        <name>Fe</name>
        <dbReference type="ChEBI" id="CHEBI:18248"/>
    </ligandPart>
</feature>
<reference key="1">
    <citation type="journal article" date="2000" name="DNA Res.">
        <title>Structural analysis of Arabidopsis thaliana chromosome 3. I. Sequence features of the regions of 4,504,864 bp covered by sixty P1 and TAC clones.</title>
        <authorList>
            <person name="Sato S."/>
            <person name="Nakamura Y."/>
            <person name="Kaneko T."/>
            <person name="Katoh T."/>
            <person name="Asamizu E."/>
            <person name="Tabata S."/>
        </authorList>
    </citation>
    <scope>NUCLEOTIDE SEQUENCE [LARGE SCALE GENOMIC DNA]</scope>
    <source>
        <strain>cv. Columbia</strain>
    </source>
</reference>
<reference key="2">
    <citation type="journal article" date="2017" name="Plant J.">
        <title>Araport11: a complete reannotation of the Arabidopsis thaliana reference genome.</title>
        <authorList>
            <person name="Cheng C.Y."/>
            <person name="Krishnakumar V."/>
            <person name="Chan A.P."/>
            <person name="Thibaud-Nissen F."/>
            <person name="Schobel S."/>
            <person name="Town C.D."/>
        </authorList>
    </citation>
    <scope>GENOME REANNOTATION</scope>
    <source>
        <strain>cv. Columbia</strain>
    </source>
</reference>
<reference key="3">
    <citation type="submission" date="2004-08" db="EMBL/GenBank/DDBJ databases">
        <title>Arabidopsis ORF clones.</title>
        <authorList>
            <person name="Cheuk R.F."/>
            <person name="Chen H."/>
            <person name="Kim C.J."/>
            <person name="Shinn P."/>
            <person name="Ecker J.R."/>
        </authorList>
    </citation>
    <scope>NUCLEOTIDE SEQUENCE [LARGE SCALE MRNA]</scope>
    <source>
        <strain>cv. Columbia</strain>
    </source>
</reference>
<organism>
    <name type="scientific">Arabidopsis thaliana</name>
    <name type="common">Mouse-ear cress</name>
    <dbReference type="NCBI Taxonomy" id="3702"/>
    <lineage>
        <taxon>Eukaryota</taxon>
        <taxon>Viridiplantae</taxon>
        <taxon>Streptophyta</taxon>
        <taxon>Embryophyta</taxon>
        <taxon>Tracheophyta</taxon>
        <taxon>Spermatophyta</taxon>
        <taxon>Magnoliopsida</taxon>
        <taxon>eudicotyledons</taxon>
        <taxon>Gunneridae</taxon>
        <taxon>Pentapetalae</taxon>
        <taxon>rosids</taxon>
        <taxon>malvids</taxon>
        <taxon>Brassicales</taxon>
        <taxon>Brassicaceae</taxon>
        <taxon>Camelineae</taxon>
        <taxon>Arabidopsis</taxon>
    </lineage>
</organism>
<keyword id="KW-0349">Heme</keyword>
<keyword id="KW-0408">Iron</keyword>
<keyword id="KW-0472">Membrane</keyword>
<keyword id="KW-0479">Metal-binding</keyword>
<keyword id="KW-0503">Monooxygenase</keyword>
<keyword id="KW-0560">Oxidoreductase</keyword>
<keyword id="KW-1185">Reference proteome</keyword>
<keyword id="KW-0812">Transmembrane</keyword>
<keyword id="KW-1133">Transmembrane helix</keyword>
<proteinExistence type="evidence at transcript level"/>